<reference evidence="11 12" key="1">
    <citation type="journal article" date="1998" name="Development">
        <title>XBF-1, a winged helix transcription factor with dual activity, has a role in positioning neurogenesis in Xenopus competent ectoderm.</title>
        <authorList>
            <person name="Bourguignon C."/>
            <person name="Li J."/>
            <person name="Papalopulu N."/>
        </authorList>
    </citation>
    <scope>NUCLEOTIDE SEQUENCE [MRNA]</scope>
    <scope>FUNCTION</scope>
    <scope>TISSUE SPECIFICITY</scope>
    <source>
        <tissue evidence="9">Embryo</tissue>
    </source>
</reference>
<reference evidence="11" key="2">
    <citation type="journal article" date="1995" name="Dev. Genet.">
        <title>Differential expression of fork head genes during early Xenopus and zebrafish development.</title>
        <authorList>
            <person name="Dirksen M.-L."/>
            <person name="Jamrich M."/>
        </authorList>
    </citation>
    <scope>NUCLEOTIDE SEQUENCE [MRNA] OF 128-189</scope>
    <scope>TISSUE SPECIFICITY</scope>
    <source>
        <tissue evidence="7">Embryo</tissue>
    </source>
</reference>
<reference evidence="11" key="3">
    <citation type="journal article" date="1996" name="Development">
        <title>A posteriorising factor, retinoic acid, reveals that anteroposterior patterning controls the timing of neuronal differentiation in Xenopus neuroectoderm.</title>
        <authorList>
            <person name="Papalopulu N."/>
            <person name="Kintner C."/>
        </authorList>
    </citation>
    <scope>IDENTIFICATION</scope>
    <scope>TISSUE SPECIFICITY</scope>
    <source>
        <tissue evidence="8">Embryo</tissue>
    </source>
</reference>
<reference key="4">
    <citation type="journal article" date="1999" name="Mech. Dev.">
        <title>Xenopus brain factor-2 controls mesoderm, forebrain and neural crest development.</title>
        <authorList>
            <person name="Gomez-Skarmeta J.L."/>
            <person name="de la Calle-Mustienes E."/>
            <person name="Modolell J."/>
            <person name="Mayor R."/>
        </authorList>
    </citation>
    <scope>FUNCTION</scope>
</reference>
<reference evidence="11" key="5">
    <citation type="journal article" date="2000" name="Development">
        <title>Distinct effects of XBF-1 in regulating the cell cycle inhibitor p27(XIC1) and imparting a neural fate.</title>
        <authorList>
            <person name="Hardcastle Z."/>
            <person name="Papalopulu N."/>
        </authorList>
    </citation>
    <scope>FUNCTION</scope>
</reference>
<reference evidence="11" key="6">
    <citation type="journal article" date="2002" name="Comp. Biochem. Physiol.">
        <title>The role of the anterior neural ridge and Fgf-8 in early forebrain patterning and regionalization in Xenopus laevis.</title>
        <authorList>
            <person name="Eagleson G.W."/>
            <person name="Dempewolf R.D."/>
        </authorList>
    </citation>
    <scope>TISSUE SPECIFICITY</scope>
</reference>
<reference evidence="11" key="7">
    <citation type="journal article" date="2005" name="Gene">
        <title>Of fox and frogs: fox (fork head/winged helix) transcription factors in Xenopus development.</title>
        <authorList>
            <person name="Pohl B.S."/>
            <person name="Knoechel W."/>
        </authorList>
    </citation>
    <scope>REVIEW</scope>
</reference>
<feature type="chain" id="PRO_0000250441" description="Forkhead box protein G1">
    <location>
        <begin position="1"/>
        <end position="436"/>
    </location>
</feature>
<feature type="DNA-binding region" description="Fork-head" evidence="2">
    <location>
        <begin position="128"/>
        <end position="222"/>
    </location>
</feature>
<feature type="region of interest" description="Disordered" evidence="3">
    <location>
        <begin position="1"/>
        <end position="63"/>
    </location>
</feature>
<feature type="region of interest" description="Disordered" evidence="3">
    <location>
        <begin position="79"/>
        <end position="129"/>
    </location>
</feature>
<feature type="region of interest" description="Disordered" evidence="3">
    <location>
        <begin position="375"/>
        <end position="402"/>
    </location>
</feature>
<feature type="compositionally biased region" description="Basic and acidic residues" evidence="3">
    <location>
        <begin position="1"/>
        <end position="12"/>
    </location>
</feature>
<feature type="compositionally biased region" description="Low complexity" evidence="3">
    <location>
        <begin position="44"/>
        <end position="56"/>
    </location>
</feature>
<feature type="compositionally biased region" description="Basic and acidic residues" evidence="3">
    <location>
        <begin position="96"/>
        <end position="128"/>
    </location>
</feature>
<feature type="compositionally biased region" description="Low complexity" evidence="3">
    <location>
        <begin position="375"/>
        <end position="397"/>
    </location>
</feature>
<name>FOXG1_XENLA</name>
<proteinExistence type="evidence at transcript level"/>
<comment type="function">
    <text evidence="4 5 9">A neural-specific transcription factor that can act as both a transcriptional activator and a transcriptional repressor. Both represses and activates neuronal differentiation in a dose-dependent manner, independently regulating cell fate choice and cell proliferation. Converts ectoderm to a neural fate. Suppresses the transcription of the cell cycle inhibitor p27xic1 and promotes the proliferation of neuroectodermal cells at a high concentration. Promotes the transcription of p27xic1 and inhibits ectodermal proliferation at low concentrations. The transcription factors foxd1 and foxg1 mutually repress each other to pattern the forebrain.</text>
</comment>
<comment type="subcellular location">
    <subcellularLocation>
        <location evidence="1 11">Nucleus</location>
    </subcellularLocation>
</comment>
<comment type="tissue specificity">
    <text evidence="6 7 8 9">At late gastrula and early neurula stages, expressed in a narrow stripe at the anterior end of the neural plate. At later stages, this stripe of expression thickens and expression also appears in the lateral margin of the neural plate. The anterior line differentiates to show expression in the forebrain, anterior (nasal) retina and olfactory placode, whereas the lateral cells form neural crest cells that migrate in the first branchial arch. In tailbud stages and tadpoles, expressed primarily in the neuroepithelial cells of the telencephalon.</text>
</comment>
<accession>Q9YHC5</accession>
<accession>Q9PS85</accession>
<organism>
    <name type="scientific">Xenopus laevis</name>
    <name type="common">African clawed frog</name>
    <dbReference type="NCBI Taxonomy" id="8355"/>
    <lineage>
        <taxon>Eukaryota</taxon>
        <taxon>Metazoa</taxon>
        <taxon>Chordata</taxon>
        <taxon>Craniata</taxon>
        <taxon>Vertebrata</taxon>
        <taxon>Euteleostomi</taxon>
        <taxon>Amphibia</taxon>
        <taxon>Batrachia</taxon>
        <taxon>Anura</taxon>
        <taxon>Pipoidea</taxon>
        <taxon>Pipidae</taxon>
        <taxon>Xenopodinae</taxon>
        <taxon>Xenopus</taxon>
        <taxon>Xenopus</taxon>
    </lineage>
</organism>
<evidence type="ECO:0000255" key="1"/>
<evidence type="ECO:0000255" key="2">
    <source>
        <dbReference type="PROSITE-ProRule" id="PRU00089"/>
    </source>
</evidence>
<evidence type="ECO:0000256" key="3">
    <source>
        <dbReference type="SAM" id="MobiDB-lite"/>
    </source>
</evidence>
<evidence type="ECO:0000269" key="4">
    <source>
    </source>
</evidence>
<evidence type="ECO:0000269" key="5">
    <source>
    </source>
</evidence>
<evidence type="ECO:0000269" key="6">
    <source>
    </source>
</evidence>
<evidence type="ECO:0000269" key="7">
    <source>
    </source>
</evidence>
<evidence type="ECO:0000269" key="8">
    <source>
    </source>
</evidence>
<evidence type="ECO:0000269" key="9">
    <source>
    </source>
</evidence>
<evidence type="ECO:0000303" key="10">
    <source>
    </source>
</evidence>
<evidence type="ECO:0000305" key="11"/>
<evidence type="ECO:0000312" key="12">
    <source>
        <dbReference type="EMBL" id="AAC79501.1"/>
    </source>
</evidence>
<keyword id="KW-0010">Activator</keyword>
<keyword id="KW-0217">Developmental protein</keyword>
<keyword id="KW-0221">Differentiation</keyword>
<keyword id="KW-0238">DNA-binding</keyword>
<keyword id="KW-0524">Neurogenesis</keyword>
<keyword id="KW-0539">Nucleus</keyword>
<keyword id="KW-1185">Reference proteome</keyword>
<keyword id="KW-0678">Repressor</keyword>
<keyword id="KW-0804">Transcription</keyword>
<keyword id="KW-0805">Transcription regulation</keyword>
<gene>
    <name evidence="10" type="primary">foxg1</name>
    <name type="synonym">bf-1</name>
    <name type="synonym">bf1</name>
    <name type="synonym">fkh4</name>
</gene>
<dbReference type="EMBL" id="AF101387">
    <property type="protein sequence ID" value="AAC79501.1"/>
    <property type="molecule type" value="mRNA"/>
</dbReference>
<dbReference type="RefSeq" id="NP_001079165.1">
    <property type="nucleotide sequence ID" value="NM_001085696.1"/>
</dbReference>
<dbReference type="SMR" id="Q9YHC5"/>
<dbReference type="GeneID" id="373732"/>
<dbReference type="KEGG" id="xla:373732"/>
<dbReference type="AGR" id="Xenbase:XB-GENE-865339"/>
<dbReference type="CTD" id="373732"/>
<dbReference type="Xenbase" id="XB-GENE-865339">
    <property type="gene designation" value="foxg1.L"/>
</dbReference>
<dbReference type="OrthoDB" id="5954824at2759"/>
<dbReference type="Proteomes" id="UP000186698">
    <property type="component" value="Chromosome 8L"/>
</dbReference>
<dbReference type="Bgee" id="373732">
    <property type="expression patterns" value="Expressed in internal ear and 5 other cell types or tissues"/>
</dbReference>
<dbReference type="GO" id="GO:0005634">
    <property type="term" value="C:nucleus"/>
    <property type="evidence" value="ECO:0000318"/>
    <property type="project" value="GO_Central"/>
</dbReference>
<dbReference type="GO" id="GO:0003677">
    <property type="term" value="F:DNA binding"/>
    <property type="evidence" value="ECO:0000303"/>
    <property type="project" value="UniProtKB"/>
</dbReference>
<dbReference type="GO" id="GO:0003700">
    <property type="term" value="F:DNA-binding transcription factor activity"/>
    <property type="evidence" value="ECO:0000303"/>
    <property type="project" value="UniProtKB"/>
</dbReference>
<dbReference type="GO" id="GO:1990837">
    <property type="term" value="F:sequence-specific double-stranded DNA binding"/>
    <property type="evidence" value="ECO:0000318"/>
    <property type="project" value="GO_Central"/>
</dbReference>
<dbReference type="GO" id="GO:0030154">
    <property type="term" value="P:cell differentiation"/>
    <property type="evidence" value="ECO:0007669"/>
    <property type="project" value="UniProtKB-KW"/>
</dbReference>
<dbReference type="GO" id="GO:0008285">
    <property type="term" value="P:negative regulation of cell population proliferation"/>
    <property type="evidence" value="ECO:0000315"/>
    <property type="project" value="UniProtKB"/>
</dbReference>
<dbReference type="GO" id="GO:0045892">
    <property type="term" value="P:negative regulation of DNA-templated transcription"/>
    <property type="evidence" value="ECO:0000314"/>
    <property type="project" value="UniProtKB"/>
</dbReference>
<dbReference type="GO" id="GO:0050768">
    <property type="term" value="P:negative regulation of neurogenesis"/>
    <property type="evidence" value="ECO:0000315"/>
    <property type="project" value="UniProtKB"/>
</dbReference>
<dbReference type="GO" id="GO:0007399">
    <property type="term" value="P:nervous system development"/>
    <property type="evidence" value="ECO:0007669"/>
    <property type="project" value="UniProtKB-KW"/>
</dbReference>
<dbReference type="GO" id="GO:0008284">
    <property type="term" value="P:positive regulation of cell population proliferation"/>
    <property type="evidence" value="ECO:0000315"/>
    <property type="project" value="UniProtKB"/>
</dbReference>
<dbReference type="GO" id="GO:0045893">
    <property type="term" value="P:positive regulation of DNA-templated transcription"/>
    <property type="evidence" value="ECO:0000314"/>
    <property type="project" value="UniProtKB"/>
</dbReference>
<dbReference type="GO" id="GO:0050769">
    <property type="term" value="P:positive regulation of neurogenesis"/>
    <property type="evidence" value="ECO:0000315"/>
    <property type="project" value="UniProtKB"/>
</dbReference>
<dbReference type="GO" id="GO:0042659">
    <property type="term" value="P:regulation of cell fate specification"/>
    <property type="evidence" value="ECO:0000315"/>
    <property type="project" value="UniProtKB"/>
</dbReference>
<dbReference type="GO" id="GO:0006355">
    <property type="term" value="P:regulation of DNA-templated transcription"/>
    <property type="evidence" value="ECO:0000303"/>
    <property type="project" value="UniProtKB"/>
</dbReference>
<dbReference type="GO" id="GO:0006357">
    <property type="term" value="P:regulation of transcription by RNA polymerase II"/>
    <property type="evidence" value="ECO:0000318"/>
    <property type="project" value="GO_Central"/>
</dbReference>
<dbReference type="CDD" id="cd20021">
    <property type="entry name" value="FH_FOXG"/>
    <property type="match status" value="1"/>
</dbReference>
<dbReference type="FunFam" id="1.10.10.10:FF:000135">
    <property type="entry name" value="forkhead box protein G1"/>
    <property type="match status" value="1"/>
</dbReference>
<dbReference type="Gene3D" id="1.10.10.10">
    <property type="entry name" value="Winged helix-like DNA-binding domain superfamily/Winged helix DNA-binding domain"/>
    <property type="match status" value="1"/>
</dbReference>
<dbReference type="InterPro" id="IPR001766">
    <property type="entry name" value="Fork_head_dom"/>
</dbReference>
<dbReference type="InterPro" id="IPR047208">
    <property type="entry name" value="FOXG1"/>
</dbReference>
<dbReference type="InterPro" id="IPR018122">
    <property type="entry name" value="TF_fork_head_CS_1"/>
</dbReference>
<dbReference type="InterPro" id="IPR030456">
    <property type="entry name" value="TF_fork_head_CS_2"/>
</dbReference>
<dbReference type="InterPro" id="IPR036388">
    <property type="entry name" value="WH-like_DNA-bd_sf"/>
</dbReference>
<dbReference type="InterPro" id="IPR036390">
    <property type="entry name" value="WH_DNA-bd_sf"/>
</dbReference>
<dbReference type="PANTHER" id="PTHR46617">
    <property type="entry name" value="FORKHEAD BOX PROTEIN G1"/>
    <property type="match status" value="1"/>
</dbReference>
<dbReference type="PANTHER" id="PTHR46617:SF3">
    <property type="entry name" value="FORKHEAD BOX PROTEIN G1"/>
    <property type="match status" value="1"/>
</dbReference>
<dbReference type="Pfam" id="PF00250">
    <property type="entry name" value="Forkhead"/>
    <property type="match status" value="1"/>
</dbReference>
<dbReference type="PRINTS" id="PR00053">
    <property type="entry name" value="FORKHEAD"/>
</dbReference>
<dbReference type="SMART" id="SM00339">
    <property type="entry name" value="FH"/>
    <property type="match status" value="1"/>
</dbReference>
<dbReference type="SUPFAM" id="SSF46785">
    <property type="entry name" value="Winged helix' DNA-binding domain"/>
    <property type="match status" value="1"/>
</dbReference>
<dbReference type="PROSITE" id="PS00657">
    <property type="entry name" value="FORK_HEAD_1"/>
    <property type="match status" value="1"/>
</dbReference>
<dbReference type="PROSITE" id="PS00658">
    <property type="entry name" value="FORK_HEAD_2"/>
    <property type="match status" value="1"/>
</dbReference>
<dbReference type="PROSITE" id="PS50039">
    <property type="entry name" value="FORK_HEAD_3"/>
    <property type="match status" value="1"/>
</dbReference>
<protein>
    <recommendedName>
        <fullName>Forkhead box protein G1</fullName>
        <shortName>FoxG1</shortName>
    </recommendedName>
    <alternativeName>
        <fullName>Brain factor 1</fullName>
        <shortName>BF-1</shortName>
        <shortName>xBF-1</shortName>
        <shortName>xBF1</shortName>
    </alternativeName>
    <alternativeName>
        <fullName>Forkhead protein 4</fullName>
        <shortName>FKH-4</shortName>
        <shortName>xFKH4</shortName>
    </alternativeName>
</protein>
<sequence>MLDMGDRKEVKMIPKSSFSINSLMPEAVQNDNHPQPHHHHHHQQQPQHLQLPQQHHLQPHHRPLQEEDELDKSLLEVKTESLPPGKGDPAASELPGEDKDKIDDKKVDGKDGDSGKDGGDKKNGKYEKPPFSYNALIMMAIRQSPEKRLTLNGIYEFIMKNFPYYRENKQGWQNSIRHNLSLNKCFVKVPRHYDDPGKGNYWMLDPSSDDVFIGGTTGKLRRRSTTSRAKLAFKRGARLTSTGLTFMDRAGSLYWPMSPFLSLHHPRASSTLSYNGTTSAYPSQPMPYSSVLTQNSLGNNHSFSTSNGLSVDRLVNGEIPYATHHLTAAALAASVPCGLPVPCSGTYSLNPCSVNLLAGQTGYFFPHVPHPSITSQSSTSMAARAASSSTSPQAPSTLPCESLRPALPSFTTGLSGGLSDYFTHQNQGSSSNSLIH</sequence>